<protein>
    <recommendedName>
        <fullName>tRNA dimethylallyltransferase</fullName>
        <ecNumber>2.5.1.75</ecNumber>
    </recommendedName>
    <alternativeName>
        <fullName>Dimethylallyl diphosphate:tRNA dimethylallyltransferase</fullName>
        <shortName>DMAPP:tRNA dimethylallyltransferase</shortName>
        <shortName>DMATase</shortName>
    </alternativeName>
    <alternativeName>
        <fullName>Isopentenyl-diphosphate:tRNA isopentenyltransferase</fullName>
        <shortName>IPP transferase</shortName>
        <shortName>IPPT</shortName>
        <shortName>IPTase</shortName>
    </alternativeName>
</protein>
<feature type="chain" id="PRO_0000377187" description="tRNA dimethylallyltransferase">
    <location>
        <begin position="1"/>
        <end position="274"/>
    </location>
</feature>
<feature type="region of interest" description="Interaction with substrate tRNA" evidence="1">
    <location>
        <begin position="9"/>
        <end position="12"/>
    </location>
</feature>
<feature type="site" description="Interaction with substrate tRNA" evidence="1">
    <location>
        <position position="73"/>
    </location>
</feature>
<accession>B6JNQ7</accession>
<gene>
    <name type="primary">miaA</name>
    <name type="ordered locus">HPP12_1387</name>
</gene>
<reference key="1">
    <citation type="submission" date="2008-10" db="EMBL/GenBank/DDBJ databases">
        <title>The complete genome sequence of Helicobacter pylori strain P12.</title>
        <authorList>
            <person name="Fischer W."/>
            <person name="Windhager L."/>
            <person name="Karnholz A."/>
            <person name="Zeiller M."/>
            <person name="Zimmer R."/>
            <person name="Haas R."/>
        </authorList>
    </citation>
    <scope>NUCLEOTIDE SEQUENCE [LARGE SCALE GENOMIC DNA]</scope>
    <source>
        <strain>P12</strain>
    </source>
</reference>
<proteinExistence type="inferred from homology"/>
<name>MIAA_HELP2</name>
<comment type="function">
    <text evidence="1">Catalyzes the transfer of a dimethylallyl group onto the adenine at position 37 in tRNAs that read codons beginning with uridine, leading to the formation of N6-(dimethylallyl)adenosine (i(6)A).</text>
</comment>
<comment type="catalytic activity">
    <reaction>
        <text>adenosine(37) in tRNA + dimethylallyl diphosphate = N(6)-dimethylallyladenosine(37) in tRNA + diphosphate</text>
        <dbReference type="Rhea" id="RHEA:26482"/>
        <dbReference type="Rhea" id="RHEA-COMP:10162"/>
        <dbReference type="Rhea" id="RHEA-COMP:10375"/>
        <dbReference type="ChEBI" id="CHEBI:33019"/>
        <dbReference type="ChEBI" id="CHEBI:57623"/>
        <dbReference type="ChEBI" id="CHEBI:74411"/>
        <dbReference type="ChEBI" id="CHEBI:74415"/>
        <dbReference type="EC" id="2.5.1.75"/>
    </reaction>
</comment>
<comment type="cofactor">
    <cofactor evidence="1">
        <name>Mg(2+)</name>
        <dbReference type="ChEBI" id="CHEBI:18420"/>
    </cofactor>
</comment>
<comment type="subunit">
    <text evidence="1">Monomer.</text>
</comment>
<comment type="similarity">
    <text evidence="2">Belongs to the IPP transferase family.</text>
</comment>
<organism>
    <name type="scientific">Helicobacter pylori (strain P12)</name>
    <dbReference type="NCBI Taxonomy" id="570508"/>
    <lineage>
        <taxon>Bacteria</taxon>
        <taxon>Pseudomonadati</taxon>
        <taxon>Campylobacterota</taxon>
        <taxon>Epsilonproteobacteria</taxon>
        <taxon>Campylobacterales</taxon>
        <taxon>Helicobacteraceae</taxon>
        <taxon>Helicobacter</taxon>
    </lineage>
</organism>
<keyword id="KW-0067">ATP-binding</keyword>
<keyword id="KW-0460">Magnesium</keyword>
<keyword id="KW-0547">Nucleotide-binding</keyword>
<keyword id="KW-0808">Transferase</keyword>
<keyword id="KW-0819">tRNA processing</keyword>
<dbReference type="EC" id="2.5.1.75"/>
<dbReference type="EMBL" id="CP001217">
    <property type="protein sequence ID" value="ACJ08535.1"/>
    <property type="molecule type" value="Genomic_DNA"/>
</dbReference>
<dbReference type="SMR" id="B6JNQ7"/>
<dbReference type="KEGG" id="hpp:HPP12_1387"/>
<dbReference type="HOGENOM" id="CLU_032616_0_1_7"/>
<dbReference type="Proteomes" id="UP000008198">
    <property type="component" value="Chromosome"/>
</dbReference>
<dbReference type="GO" id="GO:0005524">
    <property type="term" value="F:ATP binding"/>
    <property type="evidence" value="ECO:0007669"/>
    <property type="project" value="UniProtKB-KW"/>
</dbReference>
<dbReference type="GO" id="GO:0052381">
    <property type="term" value="F:tRNA dimethylallyltransferase activity"/>
    <property type="evidence" value="ECO:0007669"/>
    <property type="project" value="UniProtKB-EC"/>
</dbReference>
<dbReference type="GO" id="GO:0006400">
    <property type="term" value="P:tRNA modification"/>
    <property type="evidence" value="ECO:0007669"/>
    <property type="project" value="TreeGrafter"/>
</dbReference>
<dbReference type="Gene3D" id="1.10.20.140">
    <property type="match status" value="1"/>
</dbReference>
<dbReference type="Gene3D" id="3.40.50.300">
    <property type="entry name" value="P-loop containing nucleotide triphosphate hydrolases"/>
    <property type="match status" value="1"/>
</dbReference>
<dbReference type="InterPro" id="IPR039657">
    <property type="entry name" value="Dimethylallyltransferase"/>
</dbReference>
<dbReference type="InterPro" id="IPR018022">
    <property type="entry name" value="IPT"/>
</dbReference>
<dbReference type="InterPro" id="IPR027417">
    <property type="entry name" value="P-loop_NTPase"/>
</dbReference>
<dbReference type="NCBIfam" id="TIGR00174">
    <property type="entry name" value="miaA"/>
    <property type="match status" value="1"/>
</dbReference>
<dbReference type="PANTHER" id="PTHR11088">
    <property type="entry name" value="TRNA DIMETHYLALLYLTRANSFERASE"/>
    <property type="match status" value="1"/>
</dbReference>
<dbReference type="PANTHER" id="PTHR11088:SF60">
    <property type="entry name" value="TRNA DIMETHYLALLYLTRANSFERASE"/>
    <property type="match status" value="1"/>
</dbReference>
<dbReference type="Pfam" id="PF01715">
    <property type="entry name" value="IPPT"/>
    <property type="match status" value="1"/>
</dbReference>
<evidence type="ECO:0000250" key="1"/>
<evidence type="ECO:0000305" key="2"/>
<sequence length="274" mass="31242">MDAEIFSLDSLSIYKDINIASAKPSLKERKNIKHYALDHLNIDEKNNAQLFKTLLEDAMRVSSKEILLIVGGSSFYLKSILEGLSDTPKISGEEVVKIEREISALANPYAFLKSIDPTIAFKIHPNDTYRIHKALEIFYLTHMPPSEYFKANPKKPFEHAISLFALHIEKNALHNNIKQRTKNMLHSGLVEEIKALYAKYPKDSQPFKAIGVKESVLFLEKQLTLKELEGAITFNPIKLAKRQNTFNKTQFNILYTGSVKEVRHAILKHSKSAY</sequence>